<comment type="function">
    <text evidence="1">Tetrapolymerization of the monopyrrole PBG into the hydroxymethylbilane pre-uroporphyrinogen in several discrete steps.</text>
</comment>
<comment type="catalytic activity">
    <reaction evidence="1">
        <text>4 porphobilinogen + H2O = hydroxymethylbilane + 4 NH4(+)</text>
        <dbReference type="Rhea" id="RHEA:13185"/>
        <dbReference type="ChEBI" id="CHEBI:15377"/>
        <dbReference type="ChEBI" id="CHEBI:28938"/>
        <dbReference type="ChEBI" id="CHEBI:57845"/>
        <dbReference type="ChEBI" id="CHEBI:58126"/>
        <dbReference type="EC" id="2.5.1.61"/>
    </reaction>
</comment>
<comment type="cofactor">
    <cofactor evidence="1">
        <name>dipyrromethane</name>
        <dbReference type="ChEBI" id="CHEBI:60342"/>
    </cofactor>
    <text evidence="1">Binds 1 dipyrromethane group covalently.</text>
</comment>
<comment type="pathway">
    <text evidence="1">Porphyrin-containing compound metabolism; protoporphyrin-IX biosynthesis; coproporphyrinogen-III from 5-aminolevulinate: step 2/4.</text>
</comment>
<comment type="subunit">
    <text evidence="1">Monomer.</text>
</comment>
<comment type="miscellaneous">
    <text evidence="1">The porphobilinogen subunits are added to the dipyrromethane group.</text>
</comment>
<comment type="similarity">
    <text evidence="1">Belongs to the HMBS family.</text>
</comment>
<sequence>MSDRVIRIATRKSALAMWQAEYVQAKLLEAHPQLKVELVPMSTQGDRILDTPLAKIGGKGLFIKELEVAMSEGRADIAVHSMKDVPVDFPAGFGLHCICERENPYDAFVSNTYASIEELPQGAIVGTSSLRRQCQIRSARPDLTIRDLRGNVNTRLAKLDDGQYDAIILAAAGLIRLEMQDRIKTYIEPTVSLPAVGQGAVGIECRNDDAELIELLKPLNHSDTESRVKAERAMNAKLNGGCQVPIGSYAVLNGDELYLRGLVGSPDGSVLLQAEKRGNVNDALSIGVDVAEQLLEKGAGDILQALYKD</sequence>
<proteinExistence type="inferred from homology"/>
<keyword id="KW-0627">Porphyrin biosynthesis</keyword>
<keyword id="KW-0808">Transferase</keyword>
<gene>
    <name evidence="1" type="primary">hemC</name>
    <name type="ordered locus">Patl_0342</name>
</gene>
<name>HEM3_PSEA6</name>
<dbReference type="EC" id="2.5.1.61" evidence="1"/>
<dbReference type="EMBL" id="CP000388">
    <property type="protein sequence ID" value="ABG38873.1"/>
    <property type="molecule type" value="Genomic_DNA"/>
</dbReference>
<dbReference type="RefSeq" id="WP_011573271.1">
    <property type="nucleotide sequence ID" value="NC_008228.1"/>
</dbReference>
<dbReference type="SMR" id="Q15Z15"/>
<dbReference type="STRING" id="342610.Patl_0342"/>
<dbReference type="KEGG" id="pat:Patl_0342"/>
<dbReference type="eggNOG" id="COG0181">
    <property type="taxonomic scope" value="Bacteria"/>
</dbReference>
<dbReference type="HOGENOM" id="CLU_019704_0_2_6"/>
<dbReference type="OrthoDB" id="9810298at2"/>
<dbReference type="UniPathway" id="UPA00251">
    <property type="reaction ID" value="UER00319"/>
</dbReference>
<dbReference type="Proteomes" id="UP000001981">
    <property type="component" value="Chromosome"/>
</dbReference>
<dbReference type="GO" id="GO:0005737">
    <property type="term" value="C:cytoplasm"/>
    <property type="evidence" value="ECO:0007669"/>
    <property type="project" value="TreeGrafter"/>
</dbReference>
<dbReference type="GO" id="GO:0004418">
    <property type="term" value="F:hydroxymethylbilane synthase activity"/>
    <property type="evidence" value="ECO:0007669"/>
    <property type="project" value="UniProtKB-UniRule"/>
</dbReference>
<dbReference type="GO" id="GO:0006782">
    <property type="term" value="P:protoporphyrinogen IX biosynthetic process"/>
    <property type="evidence" value="ECO:0007669"/>
    <property type="project" value="UniProtKB-UniRule"/>
</dbReference>
<dbReference type="CDD" id="cd13646">
    <property type="entry name" value="PBP2_EcHMBS_like"/>
    <property type="match status" value="1"/>
</dbReference>
<dbReference type="FunFam" id="3.30.160.40:FF:000002">
    <property type="entry name" value="Porphobilinogen deaminase"/>
    <property type="match status" value="1"/>
</dbReference>
<dbReference type="FunFam" id="3.40.190.10:FF:000004">
    <property type="entry name" value="Porphobilinogen deaminase"/>
    <property type="match status" value="1"/>
</dbReference>
<dbReference type="FunFam" id="3.40.190.10:FF:000005">
    <property type="entry name" value="Porphobilinogen deaminase"/>
    <property type="match status" value="1"/>
</dbReference>
<dbReference type="Gene3D" id="3.40.190.10">
    <property type="entry name" value="Periplasmic binding protein-like II"/>
    <property type="match status" value="2"/>
</dbReference>
<dbReference type="Gene3D" id="3.30.160.40">
    <property type="entry name" value="Porphobilinogen deaminase, C-terminal domain"/>
    <property type="match status" value="1"/>
</dbReference>
<dbReference type="HAMAP" id="MF_00260">
    <property type="entry name" value="Porphobil_deam"/>
    <property type="match status" value="1"/>
</dbReference>
<dbReference type="InterPro" id="IPR000860">
    <property type="entry name" value="HemC"/>
</dbReference>
<dbReference type="InterPro" id="IPR022419">
    <property type="entry name" value="Porphobilin_deaminase_cofac_BS"/>
</dbReference>
<dbReference type="InterPro" id="IPR022417">
    <property type="entry name" value="Porphobilin_deaminase_N"/>
</dbReference>
<dbReference type="InterPro" id="IPR022418">
    <property type="entry name" value="Porphobilinogen_deaminase_C"/>
</dbReference>
<dbReference type="InterPro" id="IPR036803">
    <property type="entry name" value="Porphobilinogen_deaminase_C_sf"/>
</dbReference>
<dbReference type="NCBIfam" id="TIGR00212">
    <property type="entry name" value="hemC"/>
    <property type="match status" value="1"/>
</dbReference>
<dbReference type="PANTHER" id="PTHR11557">
    <property type="entry name" value="PORPHOBILINOGEN DEAMINASE"/>
    <property type="match status" value="1"/>
</dbReference>
<dbReference type="PANTHER" id="PTHR11557:SF0">
    <property type="entry name" value="PORPHOBILINOGEN DEAMINASE"/>
    <property type="match status" value="1"/>
</dbReference>
<dbReference type="Pfam" id="PF01379">
    <property type="entry name" value="Porphobil_deam"/>
    <property type="match status" value="1"/>
</dbReference>
<dbReference type="Pfam" id="PF03900">
    <property type="entry name" value="Porphobil_deamC"/>
    <property type="match status" value="1"/>
</dbReference>
<dbReference type="PIRSF" id="PIRSF001438">
    <property type="entry name" value="4pyrrol_synth_OHMeBilane_synth"/>
    <property type="match status" value="1"/>
</dbReference>
<dbReference type="PRINTS" id="PR00151">
    <property type="entry name" value="PORPHBDMNASE"/>
</dbReference>
<dbReference type="SUPFAM" id="SSF53850">
    <property type="entry name" value="Periplasmic binding protein-like II"/>
    <property type="match status" value="1"/>
</dbReference>
<dbReference type="SUPFAM" id="SSF54782">
    <property type="entry name" value="Porphobilinogen deaminase (hydroxymethylbilane synthase), C-terminal domain"/>
    <property type="match status" value="1"/>
</dbReference>
<dbReference type="PROSITE" id="PS00533">
    <property type="entry name" value="PORPHOBILINOGEN_DEAM"/>
    <property type="match status" value="1"/>
</dbReference>
<organism>
    <name type="scientific">Pseudoalteromonas atlantica (strain T6c / ATCC BAA-1087)</name>
    <dbReference type="NCBI Taxonomy" id="3042615"/>
    <lineage>
        <taxon>Bacteria</taxon>
        <taxon>Pseudomonadati</taxon>
        <taxon>Pseudomonadota</taxon>
        <taxon>Gammaproteobacteria</taxon>
        <taxon>Alteromonadales</taxon>
        <taxon>Alteromonadaceae</taxon>
        <taxon>Paraglaciecola</taxon>
    </lineage>
</organism>
<feature type="chain" id="PRO_1000047758" description="Porphobilinogen deaminase">
    <location>
        <begin position="1"/>
        <end position="309"/>
    </location>
</feature>
<feature type="modified residue" description="S-(dipyrrolylmethanemethyl)cysteine" evidence="1">
    <location>
        <position position="242"/>
    </location>
</feature>
<evidence type="ECO:0000255" key="1">
    <source>
        <dbReference type="HAMAP-Rule" id="MF_00260"/>
    </source>
</evidence>
<accession>Q15Z15</accession>
<protein>
    <recommendedName>
        <fullName evidence="1">Porphobilinogen deaminase</fullName>
        <shortName evidence="1">PBG</shortName>
        <ecNumber evidence="1">2.5.1.61</ecNumber>
    </recommendedName>
    <alternativeName>
        <fullName evidence="1">Hydroxymethylbilane synthase</fullName>
        <shortName evidence="1">HMBS</shortName>
    </alternativeName>
    <alternativeName>
        <fullName evidence="1">Pre-uroporphyrinogen synthase</fullName>
    </alternativeName>
</protein>
<reference key="1">
    <citation type="submission" date="2006-06" db="EMBL/GenBank/DDBJ databases">
        <title>Complete sequence of Pseudoalteromonas atlantica T6c.</title>
        <authorList>
            <consortium name="US DOE Joint Genome Institute"/>
            <person name="Copeland A."/>
            <person name="Lucas S."/>
            <person name="Lapidus A."/>
            <person name="Barry K."/>
            <person name="Detter J.C."/>
            <person name="Glavina del Rio T."/>
            <person name="Hammon N."/>
            <person name="Israni S."/>
            <person name="Dalin E."/>
            <person name="Tice H."/>
            <person name="Pitluck S."/>
            <person name="Saunders E."/>
            <person name="Brettin T."/>
            <person name="Bruce D."/>
            <person name="Han C."/>
            <person name="Tapia R."/>
            <person name="Gilna P."/>
            <person name="Schmutz J."/>
            <person name="Larimer F."/>
            <person name="Land M."/>
            <person name="Hauser L."/>
            <person name="Kyrpides N."/>
            <person name="Kim E."/>
            <person name="Karls A.C."/>
            <person name="Bartlett D."/>
            <person name="Higgins B.P."/>
            <person name="Richardson P."/>
        </authorList>
    </citation>
    <scope>NUCLEOTIDE SEQUENCE [LARGE SCALE GENOMIC DNA]</scope>
    <source>
        <strain>T6c / ATCC BAA-1087</strain>
    </source>
</reference>